<accession>Q9SSK2</accession>
<feature type="chain" id="PRO_0000283359" description="Putative F-box protein At1g70970">
    <location>
        <begin position="1"/>
        <end position="402"/>
    </location>
</feature>
<feature type="domain" description="F-box">
    <location>
        <begin position="4"/>
        <end position="52"/>
    </location>
</feature>
<protein>
    <recommendedName>
        <fullName>Putative F-box protein At1g70970</fullName>
    </recommendedName>
</protein>
<keyword id="KW-1185">Reference proteome</keyword>
<dbReference type="EMBL" id="AC008148">
    <property type="protein sequence ID" value="AAD55510.1"/>
    <property type="molecule type" value="Genomic_DNA"/>
</dbReference>
<dbReference type="EMBL" id="CP002684">
    <property type="protein sequence ID" value="AEE35145.1"/>
    <property type="molecule type" value="Genomic_DNA"/>
</dbReference>
<dbReference type="PIR" id="A96734">
    <property type="entry name" value="A96734"/>
</dbReference>
<dbReference type="RefSeq" id="NP_177253.1">
    <property type="nucleotide sequence ID" value="NM_105765.1"/>
</dbReference>
<dbReference type="STRING" id="3702.Q9SSK2"/>
<dbReference type="PaxDb" id="3702-AT1G70970.1"/>
<dbReference type="EnsemblPlants" id="AT1G70970.1">
    <property type="protein sequence ID" value="AT1G70970.1"/>
    <property type="gene ID" value="AT1G70970"/>
</dbReference>
<dbReference type="GeneID" id="843435"/>
<dbReference type="Gramene" id="AT1G70970.1">
    <property type="protein sequence ID" value="AT1G70970.1"/>
    <property type="gene ID" value="AT1G70970"/>
</dbReference>
<dbReference type="KEGG" id="ath:AT1G70970"/>
<dbReference type="Araport" id="AT1G70970"/>
<dbReference type="TAIR" id="AT1G70970"/>
<dbReference type="eggNOG" id="ENOG502SXXQ">
    <property type="taxonomic scope" value="Eukaryota"/>
</dbReference>
<dbReference type="HOGENOM" id="CLU_027176_8_1_1"/>
<dbReference type="InParanoid" id="Q9SSK2"/>
<dbReference type="OMA" id="CKEERCI"/>
<dbReference type="PhylomeDB" id="Q9SSK2"/>
<dbReference type="PRO" id="PR:Q9SSK2"/>
<dbReference type="Proteomes" id="UP000006548">
    <property type="component" value="Chromosome 1"/>
</dbReference>
<dbReference type="ExpressionAtlas" id="Q9SSK2">
    <property type="expression patterns" value="baseline and differential"/>
</dbReference>
<dbReference type="InterPro" id="IPR013187">
    <property type="entry name" value="F-box-assoc_dom_typ3"/>
</dbReference>
<dbReference type="InterPro" id="IPR017451">
    <property type="entry name" value="F-box-assoc_interact_dom"/>
</dbReference>
<dbReference type="InterPro" id="IPR036047">
    <property type="entry name" value="F-box-like_dom_sf"/>
</dbReference>
<dbReference type="InterPro" id="IPR001810">
    <property type="entry name" value="F-box_dom"/>
</dbReference>
<dbReference type="NCBIfam" id="TIGR01640">
    <property type="entry name" value="F_box_assoc_1"/>
    <property type="match status" value="1"/>
</dbReference>
<dbReference type="PANTHER" id="PTHR31111">
    <property type="entry name" value="BNAA05G37150D PROTEIN-RELATED"/>
    <property type="match status" value="1"/>
</dbReference>
<dbReference type="PANTHER" id="PTHR31111:SF132">
    <property type="entry name" value="F-BOX ASSOCIATED UBIQUITINATION EFFECTOR FAMILY PROTEIN-RELATED"/>
    <property type="match status" value="1"/>
</dbReference>
<dbReference type="Pfam" id="PF00646">
    <property type="entry name" value="F-box"/>
    <property type="match status" value="1"/>
</dbReference>
<dbReference type="Pfam" id="PF08268">
    <property type="entry name" value="FBA_3"/>
    <property type="match status" value="1"/>
</dbReference>
<dbReference type="SMART" id="SM00256">
    <property type="entry name" value="FBOX"/>
    <property type="match status" value="1"/>
</dbReference>
<dbReference type="SUPFAM" id="SSF81383">
    <property type="entry name" value="F-box domain"/>
    <property type="match status" value="1"/>
</dbReference>
<organism>
    <name type="scientific">Arabidopsis thaliana</name>
    <name type="common">Mouse-ear cress</name>
    <dbReference type="NCBI Taxonomy" id="3702"/>
    <lineage>
        <taxon>Eukaryota</taxon>
        <taxon>Viridiplantae</taxon>
        <taxon>Streptophyta</taxon>
        <taxon>Embryophyta</taxon>
        <taxon>Tracheophyta</taxon>
        <taxon>Spermatophyta</taxon>
        <taxon>Magnoliopsida</taxon>
        <taxon>eudicotyledons</taxon>
        <taxon>Gunneridae</taxon>
        <taxon>Pentapetalae</taxon>
        <taxon>rosids</taxon>
        <taxon>malvids</taxon>
        <taxon>Brassicales</taxon>
        <taxon>Brassicaceae</taxon>
        <taxon>Camelineae</taxon>
        <taxon>Arabidopsis</taxon>
    </lineage>
</organism>
<name>FB86_ARATH</name>
<reference key="1">
    <citation type="journal article" date="2000" name="Nature">
        <title>Sequence and analysis of chromosome 1 of the plant Arabidopsis thaliana.</title>
        <authorList>
            <person name="Theologis A."/>
            <person name="Ecker J.R."/>
            <person name="Palm C.J."/>
            <person name="Federspiel N.A."/>
            <person name="Kaul S."/>
            <person name="White O."/>
            <person name="Alonso J."/>
            <person name="Altafi H."/>
            <person name="Araujo R."/>
            <person name="Bowman C.L."/>
            <person name="Brooks S.Y."/>
            <person name="Buehler E."/>
            <person name="Chan A."/>
            <person name="Chao Q."/>
            <person name="Chen H."/>
            <person name="Cheuk R.F."/>
            <person name="Chin C.W."/>
            <person name="Chung M.K."/>
            <person name="Conn L."/>
            <person name="Conway A.B."/>
            <person name="Conway A.R."/>
            <person name="Creasy T.H."/>
            <person name="Dewar K."/>
            <person name="Dunn P."/>
            <person name="Etgu P."/>
            <person name="Feldblyum T.V."/>
            <person name="Feng J.-D."/>
            <person name="Fong B."/>
            <person name="Fujii C.Y."/>
            <person name="Gill J.E."/>
            <person name="Goldsmith A.D."/>
            <person name="Haas B."/>
            <person name="Hansen N.F."/>
            <person name="Hughes B."/>
            <person name="Huizar L."/>
            <person name="Hunter J.L."/>
            <person name="Jenkins J."/>
            <person name="Johnson-Hopson C."/>
            <person name="Khan S."/>
            <person name="Khaykin E."/>
            <person name="Kim C.J."/>
            <person name="Koo H.L."/>
            <person name="Kremenetskaia I."/>
            <person name="Kurtz D.B."/>
            <person name="Kwan A."/>
            <person name="Lam B."/>
            <person name="Langin-Hooper S."/>
            <person name="Lee A."/>
            <person name="Lee J.M."/>
            <person name="Lenz C.A."/>
            <person name="Li J.H."/>
            <person name="Li Y.-P."/>
            <person name="Lin X."/>
            <person name="Liu S.X."/>
            <person name="Liu Z.A."/>
            <person name="Luros J.S."/>
            <person name="Maiti R."/>
            <person name="Marziali A."/>
            <person name="Militscher J."/>
            <person name="Miranda M."/>
            <person name="Nguyen M."/>
            <person name="Nierman W.C."/>
            <person name="Osborne B.I."/>
            <person name="Pai G."/>
            <person name="Peterson J."/>
            <person name="Pham P.K."/>
            <person name="Rizzo M."/>
            <person name="Rooney T."/>
            <person name="Rowley D."/>
            <person name="Sakano H."/>
            <person name="Salzberg S.L."/>
            <person name="Schwartz J.R."/>
            <person name="Shinn P."/>
            <person name="Southwick A.M."/>
            <person name="Sun H."/>
            <person name="Tallon L.J."/>
            <person name="Tambunga G."/>
            <person name="Toriumi M.J."/>
            <person name="Town C.D."/>
            <person name="Utterback T."/>
            <person name="Van Aken S."/>
            <person name="Vaysberg M."/>
            <person name="Vysotskaia V.S."/>
            <person name="Walker M."/>
            <person name="Wu D."/>
            <person name="Yu G."/>
            <person name="Fraser C.M."/>
            <person name="Venter J.C."/>
            <person name="Davis R.W."/>
        </authorList>
    </citation>
    <scope>NUCLEOTIDE SEQUENCE [LARGE SCALE GENOMIC DNA]</scope>
    <source>
        <strain>cv. Columbia</strain>
    </source>
</reference>
<reference key="2">
    <citation type="journal article" date="2017" name="Plant J.">
        <title>Araport11: a complete reannotation of the Arabidopsis thaliana reference genome.</title>
        <authorList>
            <person name="Cheng C.Y."/>
            <person name="Krishnakumar V."/>
            <person name="Chan A.P."/>
            <person name="Thibaud-Nissen F."/>
            <person name="Schobel S."/>
            <person name="Town C.D."/>
        </authorList>
    </citation>
    <scope>GENOME REANNOTATION</scope>
    <source>
        <strain>cv. Columbia</strain>
    </source>
</reference>
<gene>
    <name type="ordered locus">At1g70970</name>
    <name type="ORF">F15H11.16</name>
</gene>
<sequence length="402" mass="46677">MENSSSETLHVEDLQTEIMSWLPLKSLLRFVIVSKKWASIIRGEQFKALYLRRSMTRPRLMFMVRRIATLPPEPEMVWFQSFCKEERCIPGQLEVEFLFHSVYQEKIPYFSSGQQQLRVPPNTNYTSVSQPIGGLICLQSETKFALCNPGTKKSRALPDIQAHEKAFITSFLGYDEATNVFKVLCLTMVWAHEPSKRVYEYQVLTVESGVESCSWRGITCKEKDHTPETQGLCKGGVLYYGARSTSDHRPLVMSFNVRSQEFTAIELPDQLHISYFWNFVIYNGDIALVNESDFDPRVVNEPNGNKVFHIWVRDATAQEWQRTRIEIPRWEQNVGHVDYVFRGTTGTKELVFAQDSRHCEDDFFVLYYDTFTKDLRRFQIGVTGPKISVRTCLDHVDSLWLM</sequence>
<proteinExistence type="predicted"/>